<proteinExistence type="inferred from homology"/>
<keyword id="KW-1185">Reference proteome</keyword>
<keyword id="KW-0687">Ribonucleoprotein</keyword>
<keyword id="KW-0689">Ribosomal protein</keyword>
<keyword id="KW-0694">RNA-binding</keyword>
<keyword id="KW-0699">rRNA-binding</keyword>
<gene>
    <name evidence="1" type="primary">rplY</name>
    <name evidence="1" type="synonym">ctc</name>
    <name type="ordered locus">PSHAa1053</name>
</gene>
<reference key="1">
    <citation type="journal article" date="2005" name="Genome Res.">
        <title>Coping with cold: the genome of the versatile marine Antarctica bacterium Pseudoalteromonas haloplanktis TAC125.</title>
        <authorList>
            <person name="Medigue C."/>
            <person name="Krin E."/>
            <person name="Pascal G."/>
            <person name="Barbe V."/>
            <person name="Bernsel A."/>
            <person name="Bertin P.N."/>
            <person name="Cheung F."/>
            <person name="Cruveiller S."/>
            <person name="D'Amico S."/>
            <person name="Duilio A."/>
            <person name="Fang G."/>
            <person name="Feller G."/>
            <person name="Ho C."/>
            <person name="Mangenot S."/>
            <person name="Marino G."/>
            <person name="Nilsson J."/>
            <person name="Parrilli E."/>
            <person name="Rocha E.P.C."/>
            <person name="Rouy Z."/>
            <person name="Sekowska A."/>
            <person name="Tutino M.L."/>
            <person name="Vallenet D."/>
            <person name="von Heijne G."/>
            <person name="Danchin A."/>
        </authorList>
    </citation>
    <scope>NUCLEOTIDE SEQUENCE [LARGE SCALE GENOMIC DNA]</scope>
    <source>
        <strain>TAC 125</strain>
    </source>
</reference>
<comment type="function">
    <text evidence="1">This is one of the proteins that binds to the 5S RNA in the ribosome where it forms part of the central protuberance.</text>
</comment>
<comment type="subunit">
    <text evidence="1">Part of the 50S ribosomal subunit; part of the 5S rRNA/L5/L18/L25 subcomplex. Contacts the 5S rRNA. Binds to the 5S rRNA independently of L5 and L18.</text>
</comment>
<comment type="similarity">
    <text evidence="1">Belongs to the bacterial ribosomal protein bL25 family. CTC subfamily.</text>
</comment>
<protein>
    <recommendedName>
        <fullName evidence="1">Large ribosomal subunit protein bL25</fullName>
    </recommendedName>
    <alternativeName>
        <fullName evidence="2">50S ribosomal protein L25</fullName>
    </alternativeName>
    <alternativeName>
        <fullName evidence="1">General stress protein CTC</fullName>
    </alternativeName>
</protein>
<feature type="chain" id="PRO_0000244225" description="Large ribosomal subunit protein bL25">
    <location>
        <begin position="1"/>
        <end position="204"/>
    </location>
</feature>
<dbReference type="EMBL" id="CR954246">
    <property type="protein sequence ID" value="CAI86128.1"/>
    <property type="molecule type" value="Genomic_DNA"/>
</dbReference>
<dbReference type="SMR" id="Q3IK85"/>
<dbReference type="STRING" id="326442.PSHAa1053"/>
<dbReference type="KEGG" id="pha:PSHAa1053"/>
<dbReference type="PATRIC" id="fig|326442.8.peg.1010"/>
<dbReference type="eggNOG" id="COG1825">
    <property type="taxonomic scope" value="Bacteria"/>
</dbReference>
<dbReference type="HOGENOM" id="CLU_075939_0_1_6"/>
<dbReference type="BioCyc" id="PHAL326442:PSHA_RS05185-MONOMER"/>
<dbReference type="Proteomes" id="UP000006843">
    <property type="component" value="Chromosome I"/>
</dbReference>
<dbReference type="GO" id="GO:0022625">
    <property type="term" value="C:cytosolic large ribosomal subunit"/>
    <property type="evidence" value="ECO:0007669"/>
    <property type="project" value="TreeGrafter"/>
</dbReference>
<dbReference type="GO" id="GO:0008097">
    <property type="term" value="F:5S rRNA binding"/>
    <property type="evidence" value="ECO:0007669"/>
    <property type="project" value="InterPro"/>
</dbReference>
<dbReference type="GO" id="GO:0003735">
    <property type="term" value="F:structural constituent of ribosome"/>
    <property type="evidence" value="ECO:0007669"/>
    <property type="project" value="InterPro"/>
</dbReference>
<dbReference type="GO" id="GO:0006412">
    <property type="term" value="P:translation"/>
    <property type="evidence" value="ECO:0007669"/>
    <property type="project" value="UniProtKB-UniRule"/>
</dbReference>
<dbReference type="CDD" id="cd00495">
    <property type="entry name" value="Ribosomal_L25_TL5_CTC"/>
    <property type="match status" value="1"/>
</dbReference>
<dbReference type="FunFam" id="2.40.240.10:FF:000002">
    <property type="entry name" value="50S ribosomal protein L25"/>
    <property type="match status" value="1"/>
</dbReference>
<dbReference type="Gene3D" id="2.170.120.20">
    <property type="entry name" value="Ribosomal protein L25, beta domain"/>
    <property type="match status" value="1"/>
</dbReference>
<dbReference type="Gene3D" id="2.40.240.10">
    <property type="entry name" value="Ribosomal Protein L25, Chain P"/>
    <property type="match status" value="1"/>
</dbReference>
<dbReference type="HAMAP" id="MF_01336">
    <property type="entry name" value="Ribosomal_bL25"/>
    <property type="match status" value="1"/>
</dbReference>
<dbReference type="HAMAP" id="MF_01334">
    <property type="entry name" value="Ribosomal_bL25_CTC"/>
    <property type="match status" value="1"/>
</dbReference>
<dbReference type="InterPro" id="IPR020056">
    <property type="entry name" value="Rbsml_bL25/Gln-tRNA_synth_N"/>
</dbReference>
<dbReference type="InterPro" id="IPR011035">
    <property type="entry name" value="Ribosomal_bL25/Gln-tRNA_synth"/>
</dbReference>
<dbReference type="InterPro" id="IPR020057">
    <property type="entry name" value="Ribosomal_bL25_b-dom"/>
</dbReference>
<dbReference type="InterPro" id="IPR037121">
    <property type="entry name" value="Ribosomal_bL25_C"/>
</dbReference>
<dbReference type="InterPro" id="IPR001021">
    <property type="entry name" value="Ribosomal_bL25_long"/>
</dbReference>
<dbReference type="InterPro" id="IPR020055">
    <property type="entry name" value="Ribosomal_bL25_short"/>
</dbReference>
<dbReference type="InterPro" id="IPR029751">
    <property type="entry name" value="Ribosomal_L25_dom"/>
</dbReference>
<dbReference type="InterPro" id="IPR020930">
    <property type="entry name" value="Ribosomal_uL5_bac-type"/>
</dbReference>
<dbReference type="NCBIfam" id="TIGR00731">
    <property type="entry name" value="bL25_bact_ctc"/>
    <property type="match status" value="1"/>
</dbReference>
<dbReference type="NCBIfam" id="NF004130">
    <property type="entry name" value="PRK05618.1-5"/>
    <property type="match status" value="1"/>
</dbReference>
<dbReference type="NCBIfam" id="NF004612">
    <property type="entry name" value="PRK05943.1"/>
    <property type="match status" value="1"/>
</dbReference>
<dbReference type="PANTHER" id="PTHR33284">
    <property type="entry name" value="RIBOSOMAL PROTEIN L25/GLN-TRNA SYNTHETASE, ANTI-CODON-BINDING DOMAIN-CONTAINING PROTEIN"/>
    <property type="match status" value="1"/>
</dbReference>
<dbReference type="PANTHER" id="PTHR33284:SF1">
    <property type="entry name" value="RIBOSOMAL PROTEIN L25_GLN-TRNA SYNTHETASE, ANTI-CODON-BINDING DOMAIN-CONTAINING PROTEIN"/>
    <property type="match status" value="1"/>
</dbReference>
<dbReference type="Pfam" id="PF01386">
    <property type="entry name" value="Ribosomal_L25p"/>
    <property type="match status" value="1"/>
</dbReference>
<dbReference type="Pfam" id="PF14693">
    <property type="entry name" value="Ribosomal_TL5_C"/>
    <property type="match status" value="1"/>
</dbReference>
<dbReference type="SUPFAM" id="SSF50715">
    <property type="entry name" value="Ribosomal protein L25-like"/>
    <property type="match status" value="1"/>
</dbReference>
<name>RL25_PSET1</name>
<evidence type="ECO:0000255" key="1">
    <source>
        <dbReference type="HAMAP-Rule" id="MF_01334"/>
    </source>
</evidence>
<evidence type="ECO:0000305" key="2"/>
<sequence>MSNKTYVYNAELREQTGTGASRRLRREDKVPAIVYGANKEATSITLDHKDVIKAQESEGFYTQILTLNIGGESVETILKDIQRHPFKPKVTHLDFQRIDANQKLHTIVPIHFVGEDVVEKLGTTVVRQLTEIEISCFPKAIPDFVTVDVSKLVAGDSLHISDVALPAGVSSIDLAKGPGHDQSILIVKANKSAPTEDEAEDAAE</sequence>
<organism>
    <name type="scientific">Pseudoalteromonas translucida (strain TAC 125)</name>
    <dbReference type="NCBI Taxonomy" id="326442"/>
    <lineage>
        <taxon>Bacteria</taxon>
        <taxon>Pseudomonadati</taxon>
        <taxon>Pseudomonadota</taxon>
        <taxon>Gammaproteobacteria</taxon>
        <taxon>Alteromonadales</taxon>
        <taxon>Pseudoalteromonadaceae</taxon>
        <taxon>Pseudoalteromonas</taxon>
    </lineage>
</organism>
<accession>Q3IK85</accession>